<feature type="chain" id="PRO_0000319754" description="Histidinol-phosphate aminotransferase">
    <location>
        <begin position="1"/>
        <end position="360"/>
    </location>
</feature>
<feature type="modified residue" description="N6-(pyridoxal phosphate)lysine" evidence="1">
    <location>
        <position position="221"/>
    </location>
</feature>
<evidence type="ECO:0000255" key="1">
    <source>
        <dbReference type="HAMAP-Rule" id="MF_01023"/>
    </source>
</evidence>
<keyword id="KW-0028">Amino-acid biosynthesis</keyword>
<keyword id="KW-0032">Aminotransferase</keyword>
<keyword id="KW-0368">Histidine biosynthesis</keyword>
<keyword id="KW-0663">Pyridoxal phosphate</keyword>
<keyword id="KW-1185">Reference proteome</keyword>
<keyword id="KW-0808">Transferase</keyword>
<gene>
    <name evidence="1" type="primary">hisC</name>
    <name type="ordered locus">DSY3912</name>
</gene>
<reference key="1">
    <citation type="journal article" date="2006" name="J. Bacteriol.">
        <title>Complete genome sequence of the dehalorespiring bacterium Desulfitobacterium hafniense Y51 and comparison with Dehalococcoides ethenogenes 195.</title>
        <authorList>
            <person name="Nonaka H."/>
            <person name="Keresztes G."/>
            <person name="Shinoda Y."/>
            <person name="Ikenaga Y."/>
            <person name="Abe M."/>
            <person name="Naito K."/>
            <person name="Inatomi K."/>
            <person name="Furukawa K."/>
            <person name="Inui M."/>
            <person name="Yukawa H."/>
        </authorList>
    </citation>
    <scope>NUCLEOTIDE SEQUENCE [LARGE SCALE GENOMIC DNA]</scope>
    <source>
        <strain>Y51</strain>
    </source>
</reference>
<proteinExistence type="inferred from homology"/>
<comment type="catalytic activity">
    <reaction evidence="1">
        <text>L-histidinol phosphate + 2-oxoglutarate = 3-(imidazol-4-yl)-2-oxopropyl phosphate + L-glutamate</text>
        <dbReference type="Rhea" id="RHEA:23744"/>
        <dbReference type="ChEBI" id="CHEBI:16810"/>
        <dbReference type="ChEBI" id="CHEBI:29985"/>
        <dbReference type="ChEBI" id="CHEBI:57766"/>
        <dbReference type="ChEBI" id="CHEBI:57980"/>
        <dbReference type="EC" id="2.6.1.9"/>
    </reaction>
</comment>
<comment type="cofactor">
    <cofactor evidence="1">
        <name>pyridoxal 5'-phosphate</name>
        <dbReference type="ChEBI" id="CHEBI:597326"/>
    </cofactor>
</comment>
<comment type="pathway">
    <text evidence="1">Amino-acid biosynthesis; L-histidine biosynthesis; L-histidine from 5-phospho-alpha-D-ribose 1-diphosphate: step 7/9.</text>
</comment>
<comment type="subunit">
    <text evidence="1">Homodimer.</text>
</comment>
<comment type="similarity">
    <text evidence="1">Belongs to the class-II pyridoxal-phosphate-dependent aminotransferase family. Histidinol-phosphate aminotransferase subfamily.</text>
</comment>
<protein>
    <recommendedName>
        <fullName evidence="1">Histidinol-phosphate aminotransferase</fullName>
        <ecNumber evidence="1">2.6.1.9</ecNumber>
    </recommendedName>
    <alternativeName>
        <fullName evidence="1">Imidazole acetol-phosphate transaminase</fullName>
    </alternativeName>
</protein>
<accession>Q24QJ1</accession>
<sequence length="360" mass="39282">MVDKINLEGWMRPSIRTLKAYESKSIPDCVRLDANENPLPWPPGMIEQLLGSDIAFNRYPDGGAQELKEALSRYTGVPAEGILTGNGSDELIQLLMTTFGGEKGAVVIHPPTFSMYEAAARVTGTGVLEVPLLLTETGRDFRLDVEGMLKAAAQPQVHMIVLCNPNNPTGTLFPREEILRIVAESGKIVIVDEAYGEFSGESVVDQIPYCPNLLVMKTFSKLFAMAALRLGYLLGQPSIIGALNRARQPFNVNSFSQKAGAIALNYGKEYAEQGRILTAELAKIVEALTAFASVKVFATRANFVLFQPEDPDRVYQELIGKGFLIRNMGNLPLVGKALRLSAGSPEDNERLIKALGEILK</sequence>
<dbReference type="EC" id="2.6.1.9" evidence="1"/>
<dbReference type="EMBL" id="AP008230">
    <property type="protein sequence ID" value="BAE85701.1"/>
    <property type="molecule type" value="Genomic_DNA"/>
</dbReference>
<dbReference type="RefSeq" id="WP_011461462.1">
    <property type="nucleotide sequence ID" value="NC_007907.1"/>
</dbReference>
<dbReference type="SMR" id="Q24QJ1"/>
<dbReference type="STRING" id="138119.DSY3912"/>
<dbReference type="KEGG" id="dsy:DSY3912"/>
<dbReference type="eggNOG" id="COG0079">
    <property type="taxonomic scope" value="Bacteria"/>
</dbReference>
<dbReference type="HOGENOM" id="CLU_017584_3_1_9"/>
<dbReference type="UniPathway" id="UPA00031">
    <property type="reaction ID" value="UER00012"/>
</dbReference>
<dbReference type="Proteomes" id="UP000001946">
    <property type="component" value="Chromosome"/>
</dbReference>
<dbReference type="GO" id="GO:0004400">
    <property type="term" value="F:histidinol-phosphate transaminase activity"/>
    <property type="evidence" value="ECO:0007669"/>
    <property type="project" value="UniProtKB-UniRule"/>
</dbReference>
<dbReference type="GO" id="GO:0030170">
    <property type="term" value="F:pyridoxal phosphate binding"/>
    <property type="evidence" value="ECO:0007669"/>
    <property type="project" value="InterPro"/>
</dbReference>
<dbReference type="GO" id="GO:0000105">
    <property type="term" value="P:L-histidine biosynthetic process"/>
    <property type="evidence" value="ECO:0007669"/>
    <property type="project" value="UniProtKB-UniRule"/>
</dbReference>
<dbReference type="CDD" id="cd00609">
    <property type="entry name" value="AAT_like"/>
    <property type="match status" value="1"/>
</dbReference>
<dbReference type="Gene3D" id="3.90.1150.10">
    <property type="entry name" value="Aspartate Aminotransferase, domain 1"/>
    <property type="match status" value="1"/>
</dbReference>
<dbReference type="Gene3D" id="3.40.640.10">
    <property type="entry name" value="Type I PLP-dependent aspartate aminotransferase-like (Major domain)"/>
    <property type="match status" value="1"/>
</dbReference>
<dbReference type="HAMAP" id="MF_01023">
    <property type="entry name" value="HisC_aminotrans_2"/>
    <property type="match status" value="1"/>
</dbReference>
<dbReference type="InterPro" id="IPR004839">
    <property type="entry name" value="Aminotransferase_I/II_large"/>
</dbReference>
<dbReference type="InterPro" id="IPR005861">
    <property type="entry name" value="HisP_aminotrans"/>
</dbReference>
<dbReference type="InterPro" id="IPR015424">
    <property type="entry name" value="PyrdxlP-dep_Trfase"/>
</dbReference>
<dbReference type="InterPro" id="IPR015421">
    <property type="entry name" value="PyrdxlP-dep_Trfase_major"/>
</dbReference>
<dbReference type="InterPro" id="IPR015422">
    <property type="entry name" value="PyrdxlP-dep_Trfase_small"/>
</dbReference>
<dbReference type="NCBIfam" id="TIGR01141">
    <property type="entry name" value="hisC"/>
    <property type="match status" value="1"/>
</dbReference>
<dbReference type="PANTHER" id="PTHR42885:SF2">
    <property type="entry name" value="HISTIDINOL-PHOSPHATE AMINOTRANSFERASE"/>
    <property type="match status" value="1"/>
</dbReference>
<dbReference type="PANTHER" id="PTHR42885">
    <property type="entry name" value="HISTIDINOL-PHOSPHATE AMINOTRANSFERASE-RELATED"/>
    <property type="match status" value="1"/>
</dbReference>
<dbReference type="Pfam" id="PF00155">
    <property type="entry name" value="Aminotran_1_2"/>
    <property type="match status" value="1"/>
</dbReference>
<dbReference type="SUPFAM" id="SSF53383">
    <property type="entry name" value="PLP-dependent transferases"/>
    <property type="match status" value="1"/>
</dbReference>
<name>HIS8_DESHY</name>
<organism>
    <name type="scientific">Desulfitobacterium hafniense (strain Y51)</name>
    <dbReference type="NCBI Taxonomy" id="138119"/>
    <lineage>
        <taxon>Bacteria</taxon>
        <taxon>Bacillati</taxon>
        <taxon>Bacillota</taxon>
        <taxon>Clostridia</taxon>
        <taxon>Eubacteriales</taxon>
        <taxon>Desulfitobacteriaceae</taxon>
        <taxon>Desulfitobacterium</taxon>
    </lineage>
</organism>